<keyword id="KW-0030">Aminoacyl-tRNA synthetase</keyword>
<keyword id="KW-0067">ATP-binding</keyword>
<keyword id="KW-0963">Cytoplasm</keyword>
<keyword id="KW-0436">Ligase</keyword>
<keyword id="KW-0547">Nucleotide-binding</keyword>
<keyword id="KW-0648">Protein biosynthesis</keyword>
<keyword id="KW-1185">Reference proteome</keyword>
<name>SYW_BUCAI</name>
<evidence type="ECO:0000255" key="1">
    <source>
        <dbReference type="HAMAP-Rule" id="MF_00140"/>
    </source>
</evidence>
<dbReference type="EC" id="6.1.1.2" evidence="1"/>
<dbReference type="EMBL" id="BA000003">
    <property type="protein sequence ID" value="BAB13229.1"/>
    <property type="molecule type" value="Genomic_DNA"/>
</dbReference>
<dbReference type="RefSeq" id="NP_240343.1">
    <property type="nucleotide sequence ID" value="NC_002528.1"/>
</dbReference>
<dbReference type="RefSeq" id="WP_010896153.1">
    <property type="nucleotide sequence ID" value="NC_002528.1"/>
</dbReference>
<dbReference type="SMR" id="P57602"/>
<dbReference type="STRING" id="563178.BUAP5A_529"/>
<dbReference type="EnsemblBacteria" id="BAB13229">
    <property type="protein sequence ID" value="BAB13229"/>
    <property type="gene ID" value="BAB13229"/>
</dbReference>
<dbReference type="KEGG" id="buc:BU536"/>
<dbReference type="PATRIC" id="fig|107806.10.peg.541"/>
<dbReference type="eggNOG" id="COG0180">
    <property type="taxonomic scope" value="Bacteria"/>
</dbReference>
<dbReference type="HOGENOM" id="CLU_029244_1_2_6"/>
<dbReference type="Proteomes" id="UP000001806">
    <property type="component" value="Chromosome"/>
</dbReference>
<dbReference type="GO" id="GO:0005829">
    <property type="term" value="C:cytosol"/>
    <property type="evidence" value="ECO:0007669"/>
    <property type="project" value="TreeGrafter"/>
</dbReference>
<dbReference type="GO" id="GO:0005524">
    <property type="term" value="F:ATP binding"/>
    <property type="evidence" value="ECO:0007669"/>
    <property type="project" value="UniProtKB-UniRule"/>
</dbReference>
<dbReference type="GO" id="GO:0004830">
    <property type="term" value="F:tryptophan-tRNA ligase activity"/>
    <property type="evidence" value="ECO:0007669"/>
    <property type="project" value="UniProtKB-UniRule"/>
</dbReference>
<dbReference type="GO" id="GO:0006436">
    <property type="term" value="P:tryptophanyl-tRNA aminoacylation"/>
    <property type="evidence" value="ECO:0007669"/>
    <property type="project" value="UniProtKB-UniRule"/>
</dbReference>
<dbReference type="CDD" id="cd00806">
    <property type="entry name" value="TrpRS_core"/>
    <property type="match status" value="1"/>
</dbReference>
<dbReference type="FunFam" id="1.10.240.10:FF:000002">
    <property type="entry name" value="Tryptophan--tRNA ligase"/>
    <property type="match status" value="1"/>
</dbReference>
<dbReference type="Gene3D" id="3.40.50.620">
    <property type="entry name" value="HUPs"/>
    <property type="match status" value="1"/>
</dbReference>
<dbReference type="Gene3D" id="1.10.240.10">
    <property type="entry name" value="Tyrosyl-Transfer RNA Synthetase"/>
    <property type="match status" value="1"/>
</dbReference>
<dbReference type="HAMAP" id="MF_00140_B">
    <property type="entry name" value="Trp_tRNA_synth_B"/>
    <property type="match status" value="1"/>
</dbReference>
<dbReference type="InterPro" id="IPR001412">
    <property type="entry name" value="aa-tRNA-synth_I_CS"/>
</dbReference>
<dbReference type="InterPro" id="IPR002305">
    <property type="entry name" value="aa-tRNA-synth_Ic"/>
</dbReference>
<dbReference type="InterPro" id="IPR014729">
    <property type="entry name" value="Rossmann-like_a/b/a_fold"/>
</dbReference>
<dbReference type="InterPro" id="IPR002306">
    <property type="entry name" value="Trp-tRNA-ligase"/>
</dbReference>
<dbReference type="InterPro" id="IPR024109">
    <property type="entry name" value="Trp-tRNA-ligase_bac-type"/>
</dbReference>
<dbReference type="InterPro" id="IPR050203">
    <property type="entry name" value="Trp-tRNA_synthetase"/>
</dbReference>
<dbReference type="NCBIfam" id="TIGR00233">
    <property type="entry name" value="trpS"/>
    <property type="match status" value="1"/>
</dbReference>
<dbReference type="PANTHER" id="PTHR43766">
    <property type="entry name" value="TRYPTOPHAN--TRNA LIGASE, MITOCHONDRIAL"/>
    <property type="match status" value="1"/>
</dbReference>
<dbReference type="PANTHER" id="PTHR43766:SF1">
    <property type="entry name" value="TRYPTOPHAN--TRNA LIGASE, MITOCHONDRIAL"/>
    <property type="match status" value="1"/>
</dbReference>
<dbReference type="Pfam" id="PF00579">
    <property type="entry name" value="tRNA-synt_1b"/>
    <property type="match status" value="1"/>
</dbReference>
<dbReference type="PRINTS" id="PR01039">
    <property type="entry name" value="TRNASYNTHTRP"/>
</dbReference>
<dbReference type="SUPFAM" id="SSF52374">
    <property type="entry name" value="Nucleotidylyl transferase"/>
    <property type="match status" value="1"/>
</dbReference>
<dbReference type="PROSITE" id="PS00178">
    <property type="entry name" value="AA_TRNA_LIGASE_I"/>
    <property type="match status" value="1"/>
</dbReference>
<organism>
    <name type="scientific">Buchnera aphidicola subsp. Acyrthosiphon pisum (strain APS)</name>
    <name type="common">Acyrthosiphon pisum symbiotic bacterium</name>
    <dbReference type="NCBI Taxonomy" id="107806"/>
    <lineage>
        <taxon>Bacteria</taxon>
        <taxon>Pseudomonadati</taxon>
        <taxon>Pseudomonadota</taxon>
        <taxon>Gammaproteobacteria</taxon>
        <taxon>Enterobacterales</taxon>
        <taxon>Erwiniaceae</taxon>
        <taxon>Buchnera</taxon>
    </lineage>
</organism>
<comment type="function">
    <text evidence="1">Catalyzes the attachment of tryptophan to tRNA(Trp).</text>
</comment>
<comment type="catalytic activity">
    <reaction evidence="1">
        <text>tRNA(Trp) + L-tryptophan + ATP = L-tryptophyl-tRNA(Trp) + AMP + diphosphate + H(+)</text>
        <dbReference type="Rhea" id="RHEA:24080"/>
        <dbReference type="Rhea" id="RHEA-COMP:9671"/>
        <dbReference type="Rhea" id="RHEA-COMP:9705"/>
        <dbReference type="ChEBI" id="CHEBI:15378"/>
        <dbReference type="ChEBI" id="CHEBI:30616"/>
        <dbReference type="ChEBI" id="CHEBI:33019"/>
        <dbReference type="ChEBI" id="CHEBI:57912"/>
        <dbReference type="ChEBI" id="CHEBI:78442"/>
        <dbReference type="ChEBI" id="CHEBI:78535"/>
        <dbReference type="ChEBI" id="CHEBI:456215"/>
        <dbReference type="EC" id="6.1.1.2"/>
    </reaction>
</comment>
<comment type="subunit">
    <text evidence="1">Homodimer.</text>
</comment>
<comment type="subcellular location">
    <subcellularLocation>
        <location evidence="1">Cytoplasm</location>
    </subcellularLocation>
</comment>
<comment type="similarity">
    <text evidence="1">Belongs to the class-I aminoacyl-tRNA synthetase family.</text>
</comment>
<sequence length="335" mass="38549">MILSKPILLSAVQPSGNLTIGNYIGTMRHWSKMQNNYECLYCIADLHALTIQKNKIHLNKSILDTISFYLSCGVDPQKSIIFIQSHVYQHSQLNWILNCFSQFSELLRMTQFKIKSNCSKKINAALFNYPILMAADILLYQTNFVPVGQDQKQHVELTRNIAHRFNSLYGHVFTLPKPLITQHGSKIMSLLEPSKKMSKSDINKKNVIFLLDDIKTVISKIQNAYTDSETPSKIYYDIEKKPGISNLLEILSAITNKDIDILLKELEGMLYSEFKNIVADHLSKFLYKLQKSYNDYRNDEVYLKKIAYEGAMKSQLKSNKTLTKVYDKLGLIPLF</sequence>
<protein>
    <recommendedName>
        <fullName evidence="1">Tryptophan--tRNA ligase</fullName>
        <ecNumber evidence="1">6.1.1.2</ecNumber>
    </recommendedName>
    <alternativeName>
        <fullName evidence="1">Tryptophanyl-tRNA synthetase</fullName>
        <shortName evidence="1">TrpRS</shortName>
    </alternativeName>
</protein>
<gene>
    <name evidence="1" type="primary">trpS</name>
    <name type="ordered locus">BU536</name>
</gene>
<accession>P57602</accession>
<proteinExistence type="inferred from homology"/>
<feature type="chain" id="PRO_0000136610" description="Tryptophan--tRNA ligase">
    <location>
        <begin position="1"/>
        <end position="335"/>
    </location>
</feature>
<feature type="short sequence motif" description="'HIGH' region" evidence="1">
    <location>
        <begin position="14"/>
        <end position="22"/>
    </location>
</feature>
<feature type="short sequence motif" description="'KMSKS' region" evidence="1">
    <location>
        <begin position="196"/>
        <end position="200"/>
    </location>
</feature>
<feature type="binding site" evidence="1">
    <location>
        <begin position="13"/>
        <end position="15"/>
    </location>
    <ligand>
        <name>ATP</name>
        <dbReference type="ChEBI" id="CHEBI:30616"/>
    </ligand>
</feature>
<feature type="binding site" evidence="1">
    <location>
        <begin position="21"/>
        <end position="22"/>
    </location>
    <ligand>
        <name>ATP</name>
        <dbReference type="ChEBI" id="CHEBI:30616"/>
    </ligand>
</feature>
<feature type="binding site" evidence="1">
    <location>
        <position position="136"/>
    </location>
    <ligand>
        <name>L-tryptophan</name>
        <dbReference type="ChEBI" id="CHEBI:57912"/>
    </ligand>
</feature>
<feature type="binding site" evidence="1">
    <location>
        <begin position="148"/>
        <end position="150"/>
    </location>
    <ligand>
        <name>ATP</name>
        <dbReference type="ChEBI" id="CHEBI:30616"/>
    </ligand>
</feature>
<feature type="binding site" evidence="1">
    <location>
        <position position="187"/>
    </location>
    <ligand>
        <name>ATP</name>
        <dbReference type="ChEBI" id="CHEBI:30616"/>
    </ligand>
</feature>
<feature type="binding site" evidence="1">
    <location>
        <begin position="196"/>
        <end position="200"/>
    </location>
    <ligand>
        <name>ATP</name>
        <dbReference type="ChEBI" id="CHEBI:30616"/>
    </ligand>
</feature>
<reference key="1">
    <citation type="journal article" date="2000" name="Nature">
        <title>Genome sequence of the endocellular bacterial symbiont of aphids Buchnera sp. APS.</title>
        <authorList>
            <person name="Shigenobu S."/>
            <person name="Watanabe H."/>
            <person name="Hattori M."/>
            <person name="Sakaki Y."/>
            <person name="Ishikawa H."/>
        </authorList>
    </citation>
    <scope>NUCLEOTIDE SEQUENCE [LARGE SCALE GENOMIC DNA]</scope>
    <source>
        <strain>APS</strain>
    </source>
</reference>